<name>162R_IIV6</name>
<accession>O55760</accession>
<protein>
    <recommendedName>
        <fullName>Uncharacterized protein 162R</fullName>
    </recommendedName>
</protein>
<sequence>MRKMLAYTLYIVTYLTYIMNEVECKPYTLPYRNPTDTEIENNTPIKISDTPIPDVDTAVEKKVIEYLVSKNYLRQEHFNTWENLKSLHVLTPGEAQQMIRFKRKERRAILNLQKDYSLPQTGIVDNGVREIIFGSICGTADVDEDSYEEKKR</sequence>
<organismHost>
    <name type="scientific">Acheta domesticus</name>
    <name type="common">House cricket</name>
    <dbReference type="NCBI Taxonomy" id="6997"/>
</organismHost>
<organismHost>
    <name type="scientific">Chilo suppressalis</name>
    <name type="common">Asiatic rice borer moth</name>
    <dbReference type="NCBI Taxonomy" id="168631"/>
</organismHost>
<organismHost>
    <name type="scientific">Gryllus bimaculatus</name>
    <name type="common">Two-spotted cricket</name>
    <dbReference type="NCBI Taxonomy" id="6999"/>
</organismHost>
<organismHost>
    <name type="scientific">Gryllus campestris</name>
    <dbReference type="NCBI Taxonomy" id="58607"/>
</organismHost>
<organismHost>
    <name type="scientific">Spodoptera frugiperda</name>
    <name type="common">Fall armyworm</name>
    <dbReference type="NCBI Taxonomy" id="7108"/>
</organismHost>
<dbReference type="EMBL" id="AF303741">
    <property type="protein sequence ID" value="AAB94471.1"/>
    <property type="molecule type" value="Genomic_DNA"/>
</dbReference>
<dbReference type="PIR" id="T03173">
    <property type="entry name" value="T03173"/>
</dbReference>
<dbReference type="RefSeq" id="NP_149625.1">
    <property type="nucleotide sequence ID" value="NC_003038.1"/>
</dbReference>
<dbReference type="KEGG" id="vg:1733317"/>
<dbReference type="Proteomes" id="UP000001359">
    <property type="component" value="Genome"/>
</dbReference>
<dbReference type="InterPro" id="IPR036365">
    <property type="entry name" value="PGBD-like_sf"/>
</dbReference>
<dbReference type="SUPFAM" id="SSF47090">
    <property type="entry name" value="PGBD-like"/>
    <property type="match status" value="1"/>
</dbReference>
<proteinExistence type="inferred from homology"/>
<reference key="1">
    <citation type="journal article" date="2001" name="Virology">
        <title>Analysis of the first complete DNA sequence of an invertebrate iridovirus: coding strategy of the genome of Chilo iridescent virus.</title>
        <authorList>
            <person name="Jakob N.J."/>
            <person name="Mueller K."/>
            <person name="Bahr U."/>
            <person name="Darai G."/>
        </authorList>
    </citation>
    <scope>NUCLEOTIDE SEQUENCE [LARGE SCALE GENOMIC DNA]</scope>
</reference>
<reference key="2">
    <citation type="journal article" date="2007" name="Virol. J.">
        <title>Comparative genomic analysis of the family Iridoviridae: re-annotating and defining the core set of iridovirus genes.</title>
        <authorList>
            <person name="Eaton H.E."/>
            <person name="Metcalf J."/>
            <person name="Penny E."/>
            <person name="Tcherepanov V."/>
            <person name="Upton C."/>
            <person name="Brunetti C.R."/>
        </authorList>
    </citation>
    <scope>GENOME REANNOTATION</scope>
</reference>
<organism>
    <name type="scientific">Invertebrate iridescent virus 6</name>
    <name type="common">IIV-6</name>
    <name type="synonym">Chilo iridescent virus</name>
    <dbReference type="NCBI Taxonomy" id="176652"/>
    <lineage>
        <taxon>Viruses</taxon>
        <taxon>Varidnaviria</taxon>
        <taxon>Bamfordvirae</taxon>
        <taxon>Nucleocytoviricota</taxon>
        <taxon>Megaviricetes</taxon>
        <taxon>Pimascovirales</taxon>
        <taxon>Iridoviridae</taxon>
        <taxon>Betairidovirinae</taxon>
        <taxon>Iridovirus</taxon>
    </lineage>
</organism>
<evidence type="ECO:0000255" key="1"/>
<feature type="signal peptide" evidence="1">
    <location>
        <begin position="1"/>
        <end position="24"/>
    </location>
</feature>
<feature type="chain" id="PRO_0000378017" description="Uncharacterized protein 162R">
    <location>
        <begin position="25"/>
        <end position="152"/>
    </location>
</feature>
<gene>
    <name type="ORF">IIV6-162R</name>
</gene>
<keyword id="KW-1185">Reference proteome</keyword>
<keyword id="KW-0732">Signal</keyword>